<reference key="1">
    <citation type="journal article" date="1987" name="J. Bacteriol.">
        <title>Cloning and analysis of ermG, a new macrolide-lincosamide-streptogramin B resistance element from Bacillus sphaericus.</title>
        <authorList>
            <person name="Monod M."/>
            <person name="Mohan S."/>
            <person name="Dubnau D."/>
        </authorList>
    </citation>
    <scope>NUCLEOTIDE SEQUENCE [GENOMIC DNA]</scope>
</reference>
<accession>P26840</accession>
<feature type="chain" id="PRO_0000068662" description="Probable macrolide acetyltransferase">
    <location>
        <begin position="1" status="less than"/>
        <end position="180"/>
    </location>
</feature>
<feature type="non-terminal residue">
    <location>
        <position position="1"/>
    </location>
</feature>
<organism>
    <name type="scientific">Lysinibacillus sphaericus</name>
    <name type="common">Bacillus sphaericus</name>
    <dbReference type="NCBI Taxonomy" id="1421"/>
    <lineage>
        <taxon>Bacteria</taxon>
        <taxon>Bacillati</taxon>
        <taxon>Bacillota</taxon>
        <taxon>Bacilli</taxon>
        <taxon>Bacillales</taxon>
        <taxon>Bacillaceae</taxon>
        <taxon>Lysinibacillus</taxon>
    </lineage>
</organism>
<proteinExistence type="inferred from homology"/>
<comment type="similarity">
    <text evidence="1">Belongs to the transferase hexapeptide repeat family.</text>
</comment>
<comment type="sequence caution" evidence="1">
    <conflict type="erroneous initiation">
        <sequence resource="EMBL-CDS" id="AAA22417"/>
    </conflict>
</comment>
<dbReference type="EC" id="2.3.1.-"/>
<dbReference type="EMBL" id="M15332">
    <property type="protein sequence ID" value="AAA22417.1"/>
    <property type="status" value="ALT_INIT"/>
    <property type="molecule type" value="Genomic_DNA"/>
</dbReference>
<dbReference type="PIR" id="A26930">
    <property type="entry name" value="A26930"/>
</dbReference>
<dbReference type="SMR" id="P26840"/>
<dbReference type="GO" id="GO:0016746">
    <property type="term" value="F:acyltransferase activity"/>
    <property type="evidence" value="ECO:0007669"/>
    <property type="project" value="UniProtKB-KW"/>
</dbReference>
<dbReference type="GO" id="GO:0046677">
    <property type="term" value="P:response to antibiotic"/>
    <property type="evidence" value="ECO:0007669"/>
    <property type="project" value="UniProtKB-KW"/>
</dbReference>
<dbReference type="CDD" id="cd03349">
    <property type="entry name" value="LbH_XAT"/>
    <property type="match status" value="1"/>
</dbReference>
<dbReference type="FunFam" id="2.160.10.10:FF:000037">
    <property type="entry name" value="Streptogramin A acetyltransferase"/>
    <property type="match status" value="1"/>
</dbReference>
<dbReference type="Gene3D" id="2.160.10.10">
    <property type="entry name" value="Hexapeptide repeat proteins"/>
    <property type="match status" value="1"/>
</dbReference>
<dbReference type="InterPro" id="IPR001451">
    <property type="entry name" value="Hexapep"/>
</dbReference>
<dbReference type="InterPro" id="IPR018357">
    <property type="entry name" value="Hexapep_transf_CS"/>
</dbReference>
<dbReference type="InterPro" id="IPR050179">
    <property type="entry name" value="Trans_hexapeptide_repeat"/>
</dbReference>
<dbReference type="InterPro" id="IPR011004">
    <property type="entry name" value="Trimer_LpxA-like_sf"/>
</dbReference>
<dbReference type="PANTHER" id="PTHR43300">
    <property type="entry name" value="ACETYLTRANSFERASE"/>
    <property type="match status" value="1"/>
</dbReference>
<dbReference type="PANTHER" id="PTHR43300:SF11">
    <property type="entry name" value="ACETYLTRANSFERASE RV3034C-RELATED"/>
    <property type="match status" value="1"/>
</dbReference>
<dbReference type="Pfam" id="PF00132">
    <property type="entry name" value="Hexapep"/>
    <property type="match status" value="1"/>
</dbReference>
<dbReference type="SUPFAM" id="SSF51161">
    <property type="entry name" value="Trimeric LpxA-like enzymes"/>
    <property type="match status" value="1"/>
</dbReference>
<dbReference type="PROSITE" id="PS00101">
    <property type="entry name" value="HEXAPEP_TRANSFERASES"/>
    <property type="match status" value="1"/>
</dbReference>
<sequence length="180" mass="20399">DHKNSPEKFYDNIEHHYEFIGDKLIIGKFCAIAEGVKFIMNGANHRMDGITTYPFNIFGCGWEKVTPTIEQLPFKGDTVIGNDVWIGQNVTIMPGVIIGDGAIIAANSTVVKSVEPYSIYSGNPAKFIKKRFSDEKIEFLLKLEWWNWSGEEIFDNLEILTSEAGLEELMNKYSKRDAIN</sequence>
<evidence type="ECO:0000305" key="1"/>
<name>MATA_LYSSH</name>
<keyword id="KW-0012">Acyltransferase</keyword>
<keyword id="KW-0046">Antibiotic resistance</keyword>
<keyword id="KW-0677">Repeat</keyword>
<keyword id="KW-0808">Transferase</keyword>
<protein>
    <recommendedName>
        <fullName>Probable macrolide acetyltransferase</fullName>
        <ecNumber>2.3.1.-</ecNumber>
    </recommendedName>
</protein>